<accession>A6WQU2</accession>
<sequence>MPELALLEEVVEKVRPLLGQGKVADYIPALASVDAGKLGIAVTTVDGETLGAGDYLEPFSIQSISKVFSLTLALTLYEEAEIWSRVGKEPSGHSFNSLVQVELERGKPRNPFINAGALVIADLLQSRLGAPKHRMLELVRQLSQNDKVCFDKQVADSEYQHSARNAAIAYLMKSFGNFQGDVDTVLRTYFHYCALKMNCADLSKAMLYLANRGKSITGTELISQVQTRQLNALLATSGLYDGAGEFAYRVGMPGKSGVGGGIIAVIPGELSICVWSPELDGNGNSLAGTAMLEHLSQRLGRSIF</sequence>
<feature type="chain" id="PRO_1000048357" description="Glutaminase">
    <location>
        <begin position="1"/>
        <end position="304"/>
    </location>
</feature>
<feature type="binding site" evidence="1">
    <location>
        <position position="63"/>
    </location>
    <ligand>
        <name>substrate</name>
    </ligand>
</feature>
<feature type="binding site" evidence="1">
    <location>
        <position position="114"/>
    </location>
    <ligand>
        <name>substrate</name>
    </ligand>
</feature>
<feature type="binding site" evidence="1">
    <location>
        <position position="158"/>
    </location>
    <ligand>
        <name>substrate</name>
    </ligand>
</feature>
<feature type="binding site" evidence="1">
    <location>
        <position position="165"/>
    </location>
    <ligand>
        <name>substrate</name>
    </ligand>
</feature>
<feature type="binding site" evidence="1">
    <location>
        <position position="189"/>
    </location>
    <ligand>
        <name>substrate</name>
    </ligand>
</feature>
<feature type="binding site" evidence="1">
    <location>
        <position position="240"/>
    </location>
    <ligand>
        <name>substrate</name>
    </ligand>
</feature>
<feature type="binding site" evidence="1">
    <location>
        <position position="258"/>
    </location>
    <ligand>
        <name>substrate</name>
    </ligand>
</feature>
<organism>
    <name type="scientific">Shewanella baltica (strain OS185)</name>
    <dbReference type="NCBI Taxonomy" id="402882"/>
    <lineage>
        <taxon>Bacteria</taxon>
        <taxon>Pseudomonadati</taxon>
        <taxon>Pseudomonadota</taxon>
        <taxon>Gammaproteobacteria</taxon>
        <taxon>Alteromonadales</taxon>
        <taxon>Shewanellaceae</taxon>
        <taxon>Shewanella</taxon>
    </lineage>
</organism>
<gene>
    <name evidence="1" type="primary">glsA</name>
    <name type="ordered locus">Shew185_3050</name>
</gene>
<protein>
    <recommendedName>
        <fullName evidence="1">Glutaminase</fullName>
        <ecNumber evidence="1">3.5.1.2</ecNumber>
    </recommendedName>
</protein>
<name>GLSA_SHEB8</name>
<dbReference type="EC" id="3.5.1.2" evidence="1"/>
<dbReference type="EMBL" id="CP000753">
    <property type="protein sequence ID" value="ABS09181.1"/>
    <property type="molecule type" value="Genomic_DNA"/>
</dbReference>
<dbReference type="RefSeq" id="WP_012089758.1">
    <property type="nucleotide sequence ID" value="NC_009665.1"/>
</dbReference>
<dbReference type="SMR" id="A6WQU2"/>
<dbReference type="KEGG" id="sbm:Shew185_3050"/>
<dbReference type="HOGENOM" id="CLU_027932_1_1_6"/>
<dbReference type="GO" id="GO:0004359">
    <property type="term" value="F:glutaminase activity"/>
    <property type="evidence" value="ECO:0007669"/>
    <property type="project" value="UniProtKB-UniRule"/>
</dbReference>
<dbReference type="GO" id="GO:0006537">
    <property type="term" value="P:glutamate biosynthetic process"/>
    <property type="evidence" value="ECO:0007669"/>
    <property type="project" value="TreeGrafter"/>
</dbReference>
<dbReference type="GO" id="GO:0006543">
    <property type="term" value="P:glutamine catabolic process"/>
    <property type="evidence" value="ECO:0007669"/>
    <property type="project" value="TreeGrafter"/>
</dbReference>
<dbReference type="FunFam" id="3.40.710.10:FF:000005">
    <property type="entry name" value="Glutaminase"/>
    <property type="match status" value="1"/>
</dbReference>
<dbReference type="Gene3D" id="3.40.710.10">
    <property type="entry name" value="DD-peptidase/beta-lactamase superfamily"/>
    <property type="match status" value="1"/>
</dbReference>
<dbReference type="HAMAP" id="MF_00313">
    <property type="entry name" value="Glutaminase"/>
    <property type="match status" value="1"/>
</dbReference>
<dbReference type="InterPro" id="IPR012338">
    <property type="entry name" value="Beta-lactam/transpept-like"/>
</dbReference>
<dbReference type="InterPro" id="IPR015868">
    <property type="entry name" value="Glutaminase"/>
</dbReference>
<dbReference type="NCBIfam" id="TIGR03814">
    <property type="entry name" value="Gln_ase"/>
    <property type="match status" value="1"/>
</dbReference>
<dbReference type="NCBIfam" id="NF002132">
    <property type="entry name" value="PRK00971.1-1"/>
    <property type="match status" value="1"/>
</dbReference>
<dbReference type="NCBIfam" id="NF002133">
    <property type="entry name" value="PRK00971.1-2"/>
    <property type="match status" value="1"/>
</dbReference>
<dbReference type="PANTHER" id="PTHR12544">
    <property type="entry name" value="GLUTAMINASE"/>
    <property type="match status" value="1"/>
</dbReference>
<dbReference type="PANTHER" id="PTHR12544:SF29">
    <property type="entry name" value="GLUTAMINASE"/>
    <property type="match status" value="1"/>
</dbReference>
<dbReference type="Pfam" id="PF04960">
    <property type="entry name" value="Glutaminase"/>
    <property type="match status" value="1"/>
</dbReference>
<dbReference type="SUPFAM" id="SSF56601">
    <property type="entry name" value="beta-lactamase/transpeptidase-like"/>
    <property type="match status" value="1"/>
</dbReference>
<reference key="1">
    <citation type="submission" date="2007-07" db="EMBL/GenBank/DDBJ databases">
        <title>Complete sequence of chromosome of Shewanella baltica OS185.</title>
        <authorList>
            <consortium name="US DOE Joint Genome Institute"/>
            <person name="Copeland A."/>
            <person name="Lucas S."/>
            <person name="Lapidus A."/>
            <person name="Barry K."/>
            <person name="Glavina del Rio T."/>
            <person name="Dalin E."/>
            <person name="Tice H."/>
            <person name="Pitluck S."/>
            <person name="Sims D."/>
            <person name="Brettin T."/>
            <person name="Bruce D."/>
            <person name="Detter J.C."/>
            <person name="Han C."/>
            <person name="Schmutz J."/>
            <person name="Larimer F."/>
            <person name="Land M."/>
            <person name="Hauser L."/>
            <person name="Kyrpides N."/>
            <person name="Mikhailova N."/>
            <person name="Brettar I."/>
            <person name="Rodrigues J."/>
            <person name="Konstantinidis K."/>
            <person name="Tiedje J."/>
            <person name="Richardson P."/>
        </authorList>
    </citation>
    <scope>NUCLEOTIDE SEQUENCE [LARGE SCALE GENOMIC DNA]</scope>
    <source>
        <strain>OS185</strain>
    </source>
</reference>
<evidence type="ECO:0000255" key="1">
    <source>
        <dbReference type="HAMAP-Rule" id="MF_00313"/>
    </source>
</evidence>
<proteinExistence type="inferred from homology"/>
<comment type="catalytic activity">
    <reaction evidence="1">
        <text>L-glutamine + H2O = L-glutamate + NH4(+)</text>
        <dbReference type="Rhea" id="RHEA:15889"/>
        <dbReference type="ChEBI" id="CHEBI:15377"/>
        <dbReference type="ChEBI" id="CHEBI:28938"/>
        <dbReference type="ChEBI" id="CHEBI:29985"/>
        <dbReference type="ChEBI" id="CHEBI:58359"/>
        <dbReference type="EC" id="3.5.1.2"/>
    </reaction>
</comment>
<comment type="subunit">
    <text evidence="1">Homotetramer.</text>
</comment>
<comment type="similarity">
    <text evidence="1">Belongs to the glutaminase family.</text>
</comment>
<keyword id="KW-0378">Hydrolase</keyword>